<protein>
    <recommendedName>
        <fullName>Meiotic sister chromatid recombination protein 1</fullName>
    </recommendedName>
</protein>
<reference key="1">
    <citation type="journal article" date="1997" name="Nature">
        <title>The nucleotide sequence of Saccharomyces cerevisiae chromosome XIII.</title>
        <authorList>
            <person name="Bowman S."/>
            <person name="Churcher C.M."/>
            <person name="Badcock K."/>
            <person name="Brown D."/>
            <person name="Chillingworth T."/>
            <person name="Connor R."/>
            <person name="Dedman K."/>
            <person name="Devlin K."/>
            <person name="Gentles S."/>
            <person name="Hamlin N."/>
            <person name="Hunt S."/>
            <person name="Jagels K."/>
            <person name="Lye G."/>
            <person name="Moule S."/>
            <person name="Odell C."/>
            <person name="Pearson D."/>
            <person name="Rajandream M.A."/>
            <person name="Rice P."/>
            <person name="Skelton J."/>
            <person name="Walsh S.V."/>
            <person name="Whitehead S."/>
            <person name="Barrell B.G."/>
        </authorList>
    </citation>
    <scope>NUCLEOTIDE SEQUENCE [LARGE SCALE GENOMIC DNA]</scope>
    <source>
        <strain>ATCC 204508 / S288c</strain>
    </source>
</reference>
<reference key="2">
    <citation type="journal article" date="2014" name="G3 (Bethesda)">
        <title>The reference genome sequence of Saccharomyces cerevisiae: Then and now.</title>
        <authorList>
            <person name="Engel S.R."/>
            <person name="Dietrich F.S."/>
            <person name="Fisk D.G."/>
            <person name="Binkley G."/>
            <person name="Balakrishnan R."/>
            <person name="Costanzo M.C."/>
            <person name="Dwight S.S."/>
            <person name="Hitz B.C."/>
            <person name="Karra K."/>
            <person name="Nash R.S."/>
            <person name="Weng S."/>
            <person name="Wong E.D."/>
            <person name="Lloyd P."/>
            <person name="Skrzypek M.S."/>
            <person name="Miyasato S.R."/>
            <person name="Simison M."/>
            <person name="Cherry J.M."/>
        </authorList>
    </citation>
    <scope>GENOME REANNOTATION</scope>
    <source>
        <strain>ATCC 204508 / S288c</strain>
    </source>
</reference>
<reference key="3">
    <citation type="journal article" date="2007" name="Genome Res.">
        <title>Approaching a complete repository of sequence-verified protein-encoding clones for Saccharomyces cerevisiae.</title>
        <authorList>
            <person name="Hu Y."/>
            <person name="Rolfs A."/>
            <person name="Bhullar B."/>
            <person name="Murthy T.V.S."/>
            <person name="Zhu C."/>
            <person name="Berger M.F."/>
            <person name="Camargo A.A."/>
            <person name="Kelley F."/>
            <person name="McCarron S."/>
            <person name="Jepson D."/>
            <person name="Richardson A."/>
            <person name="Raphael J."/>
            <person name="Moreira D."/>
            <person name="Taycher E."/>
            <person name="Zuo D."/>
            <person name="Mohr S."/>
            <person name="Kane M.F."/>
            <person name="Williamson J."/>
            <person name="Simpson A.J.G."/>
            <person name="Bulyk M.L."/>
            <person name="Harlow E."/>
            <person name="Marsischky G."/>
            <person name="Kolodner R.D."/>
            <person name="LaBaer J."/>
        </authorList>
    </citation>
    <scope>NUCLEOTIDE SEQUENCE [GENOMIC DNA]</scope>
    <source>
        <strain>ATCC 204508 / S288c</strain>
    </source>
</reference>
<reference key="4">
    <citation type="journal article" date="2001" name="Biochemistry">
        <title>Yeast mitochondrial dehydrogenases are associated in a supramolecular complex.</title>
        <authorList>
            <person name="Grandier-Vazeille X."/>
            <person name="Bathany K."/>
            <person name="Chaignepain S."/>
            <person name="Camougrand N."/>
            <person name="Manon S."/>
            <person name="Schmitter J.-M."/>
        </authorList>
    </citation>
    <scope>PROTEIN SEQUENCE OF 49-53; 171-180 AND 241-250</scope>
    <source>
        <strain>ATCC 201238 / W303-1B</strain>
    </source>
</reference>
<reference key="5">
    <citation type="journal article" date="1999" name="Genetics">
        <title>Genetic control of recombination partner preference in yeast meiosis. Isolation and characterization of mutants elevated for meiotic unequal sister-chromatid recombination.</title>
        <authorList>
            <person name="Thompson D.A."/>
            <person name="Stahl F.W."/>
        </authorList>
    </citation>
    <scope>MUTANT ANALYSIS</scope>
</reference>
<reference key="6">
    <citation type="journal article" date="2003" name="Genetics">
        <authorList>
            <person name="Thompson D.A."/>
            <person name="Stahl F.W."/>
        </authorList>
    </citation>
    <scope>ERRATUM OF PUBMED:10511544</scope>
</reference>
<reference key="7">
    <citation type="journal article" date="2003" name="Nature">
        <title>Global analysis of protein expression in yeast.</title>
        <authorList>
            <person name="Ghaemmaghami S."/>
            <person name="Huh W.-K."/>
            <person name="Bower K."/>
            <person name="Howson R.W."/>
            <person name="Belle A."/>
            <person name="Dephoure N."/>
            <person name="O'Shea E.K."/>
            <person name="Weissman J.S."/>
        </authorList>
    </citation>
    <scope>LEVEL OF PROTEIN EXPRESSION [LARGE SCALE ANALYSIS]</scope>
</reference>
<reference key="8">
    <citation type="journal article" date="2007" name="Mol. Cell. Proteomics">
        <title>Profiling phosphoproteins of yeast mitochondria reveals a role of phosphorylation in assembly of the ATP synthase.</title>
        <authorList>
            <person name="Reinders J."/>
            <person name="Wagner K."/>
            <person name="Zahedi R.P."/>
            <person name="Stojanovski D."/>
            <person name="Eyrich B."/>
            <person name="van der Laan M."/>
            <person name="Rehling P."/>
            <person name="Sickmann A."/>
            <person name="Pfanner N."/>
            <person name="Meisinger C."/>
        </authorList>
    </citation>
    <scope>PHOSPHORYLATION [LARGE SCALE ANALYSIS] AT THR-237 AND SER-243</scope>
    <scope>IDENTIFICATION BY MASS SPECTROMETRY [LARGE SCALE ANALYSIS]</scope>
    <source>
        <strain>ATCC 76625 / YPH499</strain>
    </source>
</reference>
<evidence type="ECO:0000269" key="1">
    <source>
    </source>
</evidence>
<evidence type="ECO:0000305" key="2"/>
<evidence type="ECO:0007744" key="3">
    <source>
    </source>
</evidence>
<comment type="miscellaneous">
    <text>Originally MSC1 was identified in a screen for mutants that show an increase in meiotic unequal sister-chromatid recombination (SCR).</text>
</comment>
<comment type="miscellaneous">
    <text evidence="1">Present with 1070 molecules/cell in log phase SD medium.</text>
</comment>
<sequence length="513" mass="59589">MKQFKLVNAVSASFVLIGLVLANSDSVFDKWTQEDLADYLRDNKKSLEKYATDSIEDLKTEASQVWDKHAQPKPWWQVWSSDSSSVSNSNPGWFGYTGSSDHPVSDWLFDTWSTDSLRNFLKKNGVDVDDAKASKDSLVKTAKENFNKISKSLKSSGYYPSSSYFDSWSTKDLQNWLNDNGIDYDKAVQSKDELVQKVKENIYRTSEKAEQQRLGLLESLDLAHQQILDTSGQIKDTVFDKWSSDQLTNWLESHKVNIDKNMAKKHDYLVRMAKENSANLKDDIYWYLDYMKRESSPFLTKTPEYVGSVWDSSKNFLTNLYSKFRGKTDNVINDTFLVGLDSWPKDKLKMFLDARGIKYSMLSTEHQLRELVKKSRNEKLKILPKDYQKYFDNSNWSLDDIKGWFADKKDDFQDSQTYSTIMQDFDKVSKNTNDAKDQIAKTWSNTFQSWSQEDLLQYLKSFGVPVKQTSTKDDLINLAKQNTQWLFGTVKEPAYKRYLHNVKNWSKSILGFN</sequence>
<organism>
    <name type="scientific">Saccharomyces cerevisiae (strain ATCC 204508 / S288c)</name>
    <name type="common">Baker's yeast</name>
    <dbReference type="NCBI Taxonomy" id="559292"/>
    <lineage>
        <taxon>Eukaryota</taxon>
        <taxon>Fungi</taxon>
        <taxon>Dikarya</taxon>
        <taxon>Ascomycota</taxon>
        <taxon>Saccharomycotina</taxon>
        <taxon>Saccharomycetes</taxon>
        <taxon>Saccharomycetales</taxon>
        <taxon>Saccharomycetaceae</taxon>
        <taxon>Saccharomyces</taxon>
    </lineage>
</organism>
<keyword id="KW-0903">Direct protein sequencing</keyword>
<keyword id="KW-0597">Phosphoprotein</keyword>
<keyword id="KW-1185">Reference proteome</keyword>
<dbReference type="EMBL" id="Z50178">
    <property type="protein sequence ID" value="CAA90555.1"/>
    <property type="molecule type" value="Genomic_DNA"/>
</dbReference>
<dbReference type="EMBL" id="AY693046">
    <property type="protein sequence ID" value="AAT93065.1"/>
    <property type="molecule type" value="Genomic_DNA"/>
</dbReference>
<dbReference type="EMBL" id="BK006946">
    <property type="protein sequence ID" value="DAA09771.1"/>
    <property type="molecule type" value="Genomic_DNA"/>
</dbReference>
<dbReference type="PIR" id="S58200">
    <property type="entry name" value="S58200"/>
</dbReference>
<dbReference type="RefSeq" id="NP_013578.1">
    <property type="nucleotide sequence ID" value="NM_001182491.1"/>
</dbReference>
<dbReference type="SMR" id="Q03104"/>
<dbReference type="BioGRID" id="35077">
    <property type="interactions" value="618"/>
</dbReference>
<dbReference type="FunCoup" id="Q03104">
    <property type="interactions" value="168"/>
</dbReference>
<dbReference type="STRING" id="4932.YML128C"/>
<dbReference type="iPTMnet" id="Q03104"/>
<dbReference type="PaxDb" id="4932-YML128C"/>
<dbReference type="PeptideAtlas" id="Q03104"/>
<dbReference type="EnsemblFungi" id="YML128C_mRNA">
    <property type="protein sequence ID" value="YML128C"/>
    <property type="gene ID" value="YML128C"/>
</dbReference>
<dbReference type="GeneID" id="854911"/>
<dbReference type="KEGG" id="sce:YML128C"/>
<dbReference type="AGR" id="SGD:S000004597"/>
<dbReference type="SGD" id="S000004597">
    <property type="gene designation" value="MSC1"/>
</dbReference>
<dbReference type="VEuPathDB" id="FungiDB:YML128C"/>
<dbReference type="eggNOG" id="ENOG502RNIV">
    <property type="taxonomic scope" value="Eukaryota"/>
</dbReference>
<dbReference type="HOGENOM" id="CLU_028751_0_0_1"/>
<dbReference type="InParanoid" id="Q03104"/>
<dbReference type="OMA" id="WTFDTWN"/>
<dbReference type="OrthoDB" id="2527403at2759"/>
<dbReference type="BioCyc" id="YEAST:G3O-32706-MONOMER"/>
<dbReference type="BioGRID-ORCS" id="854911">
    <property type="hits" value="7 hits in 10 CRISPR screens"/>
</dbReference>
<dbReference type="PRO" id="PR:Q03104"/>
<dbReference type="Proteomes" id="UP000002311">
    <property type="component" value="Chromosome XIII"/>
</dbReference>
<dbReference type="RNAct" id="Q03104">
    <property type="molecule type" value="protein"/>
</dbReference>
<dbReference type="GO" id="GO:0005783">
    <property type="term" value="C:endoplasmic reticulum"/>
    <property type="evidence" value="ECO:0007005"/>
    <property type="project" value="SGD"/>
</dbReference>
<dbReference type="GO" id="GO:0005739">
    <property type="term" value="C:mitochondrion"/>
    <property type="evidence" value="ECO:0000314"/>
    <property type="project" value="SGD"/>
</dbReference>
<dbReference type="GO" id="GO:0005635">
    <property type="term" value="C:nuclear envelope"/>
    <property type="evidence" value="ECO:0000314"/>
    <property type="project" value="SGD"/>
</dbReference>
<dbReference type="GO" id="GO:0005886">
    <property type="term" value="C:plasma membrane"/>
    <property type="evidence" value="ECO:0007005"/>
    <property type="project" value="SGD"/>
</dbReference>
<dbReference type="GO" id="GO:1990166">
    <property type="term" value="P:protein localization to site of double-strand break"/>
    <property type="evidence" value="ECO:0000315"/>
    <property type="project" value="SGD"/>
</dbReference>
<dbReference type="GO" id="GO:0007131">
    <property type="term" value="P:reciprocal meiotic recombination"/>
    <property type="evidence" value="ECO:0000315"/>
    <property type="project" value="SGD"/>
</dbReference>
<dbReference type="InterPro" id="IPR018803">
    <property type="entry name" value="Ish1/Msc1-like"/>
</dbReference>
<dbReference type="Pfam" id="PF10281">
    <property type="entry name" value="Ish1"/>
    <property type="match status" value="4"/>
</dbReference>
<name>MSC1_YEAST</name>
<proteinExistence type="evidence at protein level"/>
<feature type="chain" id="PRO_0000096591" description="Meiotic sister chromatid recombination protein 1">
    <location>
        <begin position="1"/>
        <end position="513"/>
    </location>
</feature>
<feature type="modified residue" description="Phosphothreonine" evidence="3">
    <location>
        <position position="237"/>
    </location>
</feature>
<feature type="modified residue" description="Phosphoserine" evidence="3">
    <location>
        <position position="243"/>
    </location>
</feature>
<feature type="sequence conflict" description="In Ref. 4; AA sequence." evidence="2" ref="4">
    <original>T</original>
    <variation>I</variation>
    <location>
        <position position="52"/>
    </location>
</feature>
<gene>
    <name type="primary">MSC1</name>
    <name type="ordered locus">YML128C</name>
    <name type="ORF">YM4987.07C</name>
</gene>
<accession>Q03104</accession>
<accession>D6W0F7</accession>